<reference key="1">
    <citation type="journal article" date="2007" name="PLoS Genet.">
        <title>The complete genome sequence of Yersinia pseudotuberculosis IP31758, the causative agent of Far East scarlet-like fever.</title>
        <authorList>
            <person name="Eppinger M."/>
            <person name="Rosovitz M.J."/>
            <person name="Fricke W.F."/>
            <person name="Rasko D.A."/>
            <person name="Kokorina G."/>
            <person name="Fayolle C."/>
            <person name="Lindler L.E."/>
            <person name="Carniel E."/>
            <person name="Ravel J."/>
        </authorList>
    </citation>
    <scope>NUCLEOTIDE SEQUENCE [LARGE SCALE GENOMIC DNA]</scope>
    <source>
        <strain>IP 31758</strain>
    </source>
</reference>
<dbReference type="EMBL" id="CP000720">
    <property type="protein sequence ID" value="ABS49737.1"/>
    <property type="molecule type" value="Genomic_DNA"/>
</dbReference>
<dbReference type="RefSeq" id="WP_002210892.1">
    <property type="nucleotide sequence ID" value="NC_009708.1"/>
</dbReference>
<dbReference type="SMR" id="A7FH79"/>
<dbReference type="GeneID" id="96666536"/>
<dbReference type="KEGG" id="ypi:YpsIP31758_1630"/>
<dbReference type="HOGENOM" id="CLU_189289_0_0_6"/>
<dbReference type="Proteomes" id="UP000002412">
    <property type="component" value="Chromosome"/>
</dbReference>
<dbReference type="HAMAP" id="MF_01549">
    <property type="entry name" value="DsrB"/>
    <property type="match status" value="1"/>
</dbReference>
<dbReference type="InterPro" id="IPR019717">
    <property type="entry name" value="Dextransucrase_DSRB"/>
</dbReference>
<dbReference type="NCBIfam" id="NF007981">
    <property type="entry name" value="PRK10708.1"/>
    <property type="match status" value="1"/>
</dbReference>
<dbReference type="Pfam" id="PF10781">
    <property type="entry name" value="DSRB"/>
    <property type="match status" value="1"/>
</dbReference>
<name>DSRB_YERP3</name>
<organism>
    <name type="scientific">Yersinia pseudotuberculosis serotype O:1b (strain IP 31758)</name>
    <dbReference type="NCBI Taxonomy" id="349747"/>
    <lineage>
        <taxon>Bacteria</taxon>
        <taxon>Pseudomonadati</taxon>
        <taxon>Pseudomonadota</taxon>
        <taxon>Gammaproteobacteria</taxon>
        <taxon>Enterobacterales</taxon>
        <taxon>Yersiniaceae</taxon>
        <taxon>Yersinia</taxon>
    </lineage>
</organism>
<accession>A7FH79</accession>
<sequence>MKVNDRVTVKTDGGPRREGVVLEVEEFSEGVMYLVSLADYPAGVWFFNEVDSQDGTFVEPLSQ</sequence>
<proteinExistence type="inferred from homology"/>
<evidence type="ECO:0000255" key="1">
    <source>
        <dbReference type="HAMAP-Rule" id="MF_01549"/>
    </source>
</evidence>
<comment type="similarity">
    <text evidence="1">Belongs to the DsrB family.</text>
</comment>
<feature type="chain" id="PRO_1000068819" description="Protein DsrB">
    <location>
        <begin position="1"/>
        <end position="63"/>
    </location>
</feature>
<gene>
    <name evidence="1" type="primary">dsrB</name>
    <name type="ordered locus">YpsIP31758_1630</name>
</gene>
<protein>
    <recommendedName>
        <fullName evidence="1">Protein DsrB</fullName>
    </recommendedName>
</protein>